<proteinExistence type="inferred from homology"/>
<protein>
    <recommendedName>
        <fullName evidence="1">Putative manganese efflux pump MntP</fullName>
    </recommendedName>
</protein>
<evidence type="ECO:0000255" key="1">
    <source>
        <dbReference type="HAMAP-Rule" id="MF_01521"/>
    </source>
</evidence>
<sequence length="193" mass="20370">MSLLSVIFIALGLSADCFAVSIGIACTHASIKSRVIWRVAGTFGLFQAGMVVIGFFAGLSVIDIISAFDHWIAFGLLLFIGVRMIYEALQGEDDQELVKLDLTRGLGLLGVAVATSIDALAVGLAFAVEETNIGLAALLIGLVSLTVSFLGFKLGNRISFMASRWVGVAGGLVLVFIGLKILAEHTLGWDILL</sequence>
<accession>A5FQH9</accession>
<keyword id="KW-1003">Cell membrane</keyword>
<keyword id="KW-0406">Ion transport</keyword>
<keyword id="KW-0464">Manganese</keyword>
<keyword id="KW-0472">Membrane</keyword>
<keyword id="KW-0812">Transmembrane</keyword>
<keyword id="KW-1133">Transmembrane helix</keyword>
<keyword id="KW-0813">Transport</keyword>
<name>MNTP_DEHMB</name>
<organism>
    <name type="scientific">Dehalococcoides mccartyi (strain ATCC BAA-2100 / JCM 16839 / KCTC 5957 / BAV1)</name>
    <dbReference type="NCBI Taxonomy" id="216389"/>
    <lineage>
        <taxon>Bacteria</taxon>
        <taxon>Bacillati</taxon>
        <taxon>Chloroflexota</taxon>
        <taxon>Dehalococcoidia</taxon>
        <taxon>Dehalococcoidales</taxon>
        <taxon>Dehalococcoidaceae</taxon>
        <taxon>Dehalococcoides</taxon>
    </lineage>
</organism>
<gene>
    <name evidence="1" type="primary">mntP</name>
    <name type="ordered locus">DehaBAV1_0963</name>
</gene>
<feature type="chain" id="PRO_1000087550" description="Putative manganese efflux pump MntP">
    <location>
        <begin position="1"/>
        <end position="193"/>
    </location>
</feature>
<feature type="transmembrane region" description="Helical" evidence="1">
    <location>
        <begin position="6"/>
        <end position="26"/>
    </location>
</feature>
<feature type="transmembrane region" description="Helical" evidence="1">
    <location>
        <begin position="48"/>
        <end position="68"/>
    </location>
</feature>
<feature type="transmembrane region" description="Helical" evidence="1">
    <location>
        <begin position="71"/>
        <end position="91"/>
    </location>
</feature>
<feature type="transmembrane region" description="Helical" evidence="1">
    <location>
        <begin position="108"/>
        <end position="128"/>
    </location>
</feature>
<feature type="transmembrane region" description="Helical" evidence="1">
    <location>
        <begin position="132"/>
        <end position="152"/>
    </location>
</feature>
<feature type="transmembrane region" description="Helical" evidence="1">
    <location>
        <begin position="165"/>
        <end position="185"/>
    </location>
</feature>
<dbReference type="EMBL" id="CP000688">
    <property type="protein sequence ID" value="ABQ17543.1"/>
    <property type="molecule type" value="Genomic_DNA"/>
</dbReference>
<dbReference type="KEGG" id="deb:DehaBAV1_0963"/>
<dbReference type="PATRIC" id="fig|216389.18.peg.1017"/>
<dbReference type="HOGENOM" id="CLU_096410_3_0_0"/>
<dbReference type="GO" id="GO:0005886">
    <property type="term" value="C:plasma membrane"/>
    <property type="evidence" value="ECO:0007669"/>
    <property type="project" value="UniProtKB-SubCell"/>
</dbReference>
<dbReference type="GO" id="GO:0005384">
    <property type="term" value="F:manganese ion transmembrane transporter activity"/>
    <property type="evidence" value="ECO:0007669"/>
    <property type="project" value="UniProtKB-UniRule"/>
</dbReference>
<dbReference type="HAMAP" id="MF_01521">
    <property type="entry name" value="MntP_pump"/>
    <property type="match status" value="1"/>
</dbReference>
<dbReference type="InterPro" id="IPR003810">
    <property type="entry name" value="Mntp/YtaF"/>
</dbReference>
<dbReference type="InterPro" id="IPR022929">
    <property type="entry name" value="Put_MntP"/>
</dbReference>
<dbReference type="PANTHER" id="PTHR35529">
    <property type="entry name" value="MANGANESE EFFLUX PUMP MNTP-RELATED"/>
    <property type="match status" value="1"/>
</dbReference>
<dbReference type="PANTHER" id="PTHR35529:SF1">
    <property type="entry name" value="MANGANESE EFFLUX PUMP MNTP-RELATED"/>
    <property type="match status" value="1"/>
</dbReference>
<dbReference type="Pfam" id="PF02659">
    <property type="entry name" value="Mntp"/>
    <property type="match status" value="1"/>
</dbReference>
<reference key="1">
    <citation type="submission" date="2007-05" db="EMBL/GenBank/DDBJ databases">
        <title>Complete sequence of Dehalococcoides sp. BAV1.</title>
        <authorList>
            <consortium name="US DOE Joint Genome Institute"/>
            <person name="Copeland A."/>
            <person name="Lucas S."/>
            <person name="Lapidus A."/>
            <person name="Barry K."/>
            <person name="Detter J.C."/>
            <person name="Glavina del Rio T."/>
            <person name="Hammon N."/>
            <person name="Israni S."/>
            <person name="Pitluck S."/>
            <person name="Lowry S."/>
            <person name="Clum A."/>
            <person name="Schmutz J."/>
            <person name="Larimer F."/>
            <person name="Land M."/>
            <person name="Hauser L."/>
            <person name="Kyrpides N."/>
            <person name="Kim E."/>
            <person name="Ritalahti K.M."/>
            <person name="Loeffler F."/>
            <person name="Richardson P."/>
        </authorList>
    </citation>
    <scope>NUCLEOTIDE SEQUENCE [LARGE SCALE GENOMIC DNA]</scope>
    <source>
        <strain>ATCC BAA-2100 / JCM 16839 / KCTC 5957 / BAV1</strain>
    </source>
</reference>
<comment type="function">
    <text evidence="1">Probably functions as a manganese efflux pump.</text>
</comment>
<comment type="subcellular location">
    <subcellularLocation>
        <location evidence="1">Cell membrane</location>
        <topology evidence="1">Multi-pass membrane protein</topology>
    </subcellularLocation>
</comment>
<comment type="similarity">
    <text evidence="1">Belongs to the MntP (TC 9.B.29) family.</text>
</comment>